<sequence>MGAGSSKPEASAGSKHIFESNSPIQFSSNLVDGLQSNTETDSARAKSLELEIQNRVAKELERLRAREQQTLAEIEKRLSEAKDTGSFASAPSAPAVTHYPAGSLDLDAPRIPFAGREYAPPPPAAVEVAAVNKELNRESVNSEIEELRVKLEGRKKLAELDEGVAKAQKDVVSCLRLNDRRPLDCWKEVAEFKKEVARLEEGFVDRIVG</sequence>
<proteinExistence type="evidence at protein level"/>
<feature type="chain" id="PRO_0000363399" description="MICOS complex subunit mic19">
    <location>
        <begin position="1"/>
        <end position="209"/>
    </location>
</feature>
<feature type="coiled-coil region" evidence="2">
    <location>
        <begin position="48"/>
        <end position="86"/>
    </location>
</feature>
<feature type="coiled-coil region" evidence="2">
    <location>
        <begin position="127"/>
        <end position="156"/>
    </location>
</feature>
<name>MIC19_EMENI</name>
<keyword id="KW-0175">Coiled coil</keyword>
<keyword id="KW-0472">Membrane</keyword>
<keyword id="KW-0496">Mitochondrion</keyword>
<keyword id="KW-0999">Mitochondrion inner membrane</keyword>
<keyword id="KW-1185">Reference proteome</keyword>
<keyword id="KW-0346">Stress response</keyword>
<reference key="1">
    <citation type="journal article" date="2005" name="Nature">
        <title>Sequencing of Aspergillus nidulans and comparative analysis with A. fumigatus and A. oryzae.</title>
        <authorList>
            <person name="Galagan J.E."/>
            <person name="Calvo S.E."/>
            <person name="Cuomo C."/>
            <person name="Ma L.-J."/>
            <person name="Wortman J.R."/>
            <person name="Batzoglou S."/>
            <person name="Lee S.-I."/>
            <person name="Bastuerkmen M."/>
            <person name="Spevak C.C."/>
            <person name="Clutterbuck J."/>
            <person name="Kapitonov V."/>
            <person name="Jurka J."/>
            <person name="Scazzocchio C."/>
            <person name="Farman M.L."/>
            <person name="Butler J."/>
            <person name="Purcell S."/>
            <person name="Harris S."/>
            <person name="Braus G.H."/>
            <person name="Draht O."/>
            <person name="Busch S."/>
            <person name="D'Enfert C."/>
            <person name="Bouchier C."/>
            <person name="Goldman G.H."/>
            <person name="Bell-Pedersen D."/>
            <person name="Griffiths-Jones S."/>
            <person name="Doonan J.H."/>
            <person name="Yu J."/>
            <person name="Vienken K."/>
            <person name="Pain A."/>
            <person name="Freitag M."/>
            <person name="Selker E.U."/>
            <person name="Archer D.B."/>
            <person name="Penalva M.A."/>
            <person name="Oakley B.R."/>
            <person name="Momany M."/>
            <person name="Tanaka T."/>
            <person name="Kumagai T."/>
            <person name="Asai K."/>
            <person name="Machida M."/>
            <person name="Nierman W.C."/>
            <person name="Denning D.W."/>
            <person name="Caddick M.X."/>
            <person name="Hynes M."/>
            <person name="Paoletti M."/>
            <person name="Fischer R."/>
            <person name="Miller B.L."/>
            <person name="Dyer P.S."/>
            <person name="Sachs M.S."/>
            <person name="Osmani S.A."/>
            <person name="Birren B.W."/>
        </authorList>
    </citation>
    <scope>NUCLEOTIDE SEQUENCE [LARGE SCALE GENOMIC DNA]</scope>
    <source>
        <strain>FGSC A4 / ATCC 38163 / CBS 112.46 / NRRL 194 / M139</strain>
    </source>
</reference>
<reference key="2">
    <citation type="journal article" date="2009" name="Fungal Genet. Biol.">
        <title>The 2008 update of the Aspergillus nidulans genome annotation: a community effort.</title>
        <authorList>
            <person name="Wortman J.R."/>
            <person name="Gilsenan J.M."/>
            <person name="Joardar V."/>
            <person name="Deegan J."/>
            <person name="Clutterbuck J."/>
            <person name="Andersen M.R."/>
            <person name="Archer D."/>
            <person name="Bencina M."/>
            <person name="Braus G."/>
            <person name="Coutinho P."/>
            <person name="von Dohren H."/>
            <person name="Doonan J."/>
            <person name="Driessen A.J."/>
            <person name="Durek P."/>
            <person name="Espeso E."/>
            <person name="Fekete E."/>
            <person name="Flipphi M."/>
            <person name="Estrada C.G."/>
            <person name="Geysens S."/>
            <person name="Goldman G."/>
            <person name="de Groot P.W."/>
            <person name="Hansen K."/>
            <person name="Harris S.D."/>
            <person name="Heinekamp T."/>
            <person name="Helmstaedt K."/>
            <person name="Henrissat B."/>
            <person name="Hofmann G."/>
            <person name="Homan T."/>
            <person name="Horio T."/>
            <person name="Horiuchi H."/>
            <person name="James S."/>
            <person name="Jones M."/>
            <person name="Karaffa L."/>
            <person name="Karanyi Z."/>
            <person name="Kato M."/>
            <person name="Keller N."/>
            <person name="Kelly D.E."/>
            <person name="Kiel J.A."/>
            <person name="Kim J.M."/>
            <person name="van der Klei I.J."/>
            <person name="Klis F.M."/>
            <person name="Kovalchuk A."/>
            <person name="Krasevec N."/>
            <person name="Kubicek C.P."/>
            <person name="Liu B."/>
            <person name="Maccabe A."/>
            <person name="Meyer V."/>
            <person name="Mirabito P."/>
            <person name="Miskei M."/>
            <person name="Mos M."/>
            <person name="Mullins J."/>
            <person name="Nelson D.R."/>
            <person name="Nielsen J."/>
            <person name="Oakley B.R."/>
            <person name="Osmani S.A."/>
            <person name="Pakula T."/>
            <person name="Paszewski A."/>
            <person name="Paulsen I."/>
            <person name="Pilsyk S."/>
            <person name="Pocsi I."/>
            <person name="Punt P.J."/>
            <person name="Ram A.F."/>
            <person name="Ren Q."/>
            <person name="Robellet X."/>
            <person name="Robson G."/>
            <person name="Seiboth B."/>
            <person name="van Solingen P."/>
            <person name="Specht T."/>
            <person name="Sun J."/>
            <person name="Taheri-Talesh N."/>
            <person name="Takeshita N."/>
            <person name="Ussery D."/>
            <person name="vanKuyk P.A."/>
            <person name="Visser H."/>
            <person name="van de Vondervoort P.J."/>
            <person name="de Vries R.P."/>
            <person name="Walton J."/>
            <person name="Xiang X."/>
            <person name="Xiong Y."/>
            <person name="Zeng A.P."/>
            <person name="Brandt B.W."/>
            <person name="Cornell M.J."/>
            <person name="van den Hondel C.A."/>
            <person name="Visser J."/>
            <person name="Oliver S.G."/>
            <person name="Turner G."/>
        </authorList>
    </citation>
    <scope>GENOME REANNOTATION</scope>
    <source>
        <strain>FGSC A4 / ATCC 38163 / CBS 112.46 / NRRL 194 / M139</strain>
    </source>
</reference>
<reference key="3">
    <citation type="journal article" date="2007" name="Fungal Genet. Biol.">
        <title>Proteome map of Aspergillus nidulans during osmoadaptation.</title>
        <authorList>
            <person name="Kim Y."/>
            <person name="Nandakumar M.P."/>
            <person name="Marten M.R."/>
        </authorList>
    </citation>
    <scope>INDUCTION</scope>
    <scope>IDENTIFICATION BY MASS SPECTROMETRY</scope>
</reference>
<accession>Q5ASP0</accession>
<dbReference type="EMBL" id="AACD01000160">
    <property type="protein sequence ID" value="EAA60239.1"/>
    <property type="status" value="ALT_SEQ"/>
    <property type="molecule type" value="Genomic_DNA"/>
</dbReference>
<dbReference type="EMBL" id="BN001303">
    <property type="status" value="NOT_ANNOTATED_CDS"/>
    <property type="molecule type" value="Genomic_DNA"/>
</dbReference>
<dbReference type="RefSeq" id="XP_681959.1">
    <property type="nucleotide sequence ID" value="XM_676867.1"/>
</dbReference>
<dbReference type="SMR" id="Q5ASP0"/>
<dbReference type="FunCoup" id="Q5ASP0">
    <property type="interactions" value="45"/>
</dbReference>
<dbReference type="VEuPathDB" id="FungiDB:AN8690"/>
<dbReference type="HOGENOM" id="CLU_093897_0_0_1"/>
<dbReference type="InParanoid" id="Q5ASP0"/>
<dbReference type="Proteomes" id="UP000000560">
    <property type="component" value="Chromosome III"/>
</dbReference>
<dbReference type="GO" id="GO:0005743">
    <property type="term" value="C:mitochondrial inner membrane"/>
    <property type="evidence" value="ECO:0007669"/>
    <property type="project" value="UniProtKB-SubCell"/>
</dbReference>
<dbReference type="GO" id="GO:0071470">
    <property type="term" value="P:cellular response to osmotic stress"/>
    <property type="evidence" value="ECO:0000270"/>
    <property type="project" value="AspGD"/>
</dbReference>
<dbReference type="InterPro" id="IPR012471">
    <property type="entry name" value="DUF1690"/>
</dbReference>
<dbReference type="Pfam" id="PF07956">
    <property type="entry name" value="DUF1690"/>
    <property type="match status" value="1"/>
</dbReference>
<comment type="function">
    <text evidence="1">Component of the MICOS complex, a large protein complex of the mitochondrial inner membrane that plays crucial roles in the maintenance of crista junctions, inner membrane architecture, and formation of contact sites to the outer membrane (By similarity). Involved in osmoadaptation.</text>
</comment>
<comment type="subunit">
    <text evidence="1">Component of the mitochondrial contact site and cristae organizing system (MICOS) complex.</text>
</comment>
<comment type="subcellular location">
    <subcellularLocation>
        <location evidence="1">Mitochondrion inner membrane</location>
        <topology evidence="1">Peripheral membrane protein</topology>
        <orientation evidence="1">Intermembrane side</orientation>
    </subcellularLocation>
</comment>
<comment type="induction">
    <text evidence="3">Down-regulated when grown with elevated levels of potassium chloride.</text>
</comment>
<comment type="similarity">
    <text evidence="4">Belongs to the MICOS complex subunit Mic19 family.</text>
</comment>
<comment type="sequence caution" evidence="4">
    <conflict type="erroneous gene model prediction">
        <sequence resource="EMBL-CDS" id="EAA60239"/>
    </conflict>
</comment>
<evidence type="ECO:0000250" key="1"/>
<evidence type="ECO:0000255" key="2"/>
<evidence type="ECO:0000269" key="3">
    <source>
    </source>
</evidence>
<evidence type="ECO:0000305" key="4"/>
<organism>
    <name type="scientific">Emericella nidulans (strain FGSC A4 / ATCC 38163 / CBS 112.46 / NRRL 194 / M139)</name>
    <name type="common">Aspergillus nidulans</name>
    <dbReference type="NCBI Taxonomy" id="227321"/>
    <lineage>
        <taxon>Eukaryota</taxon>
        <taxon>Fungi</taxon>
        <taxon>Dikarya</taxon>
        <taxon>Ascomycota</taxon>
        <taxon>Pezizomycotina</taxon>
        <taxon>Eurotiomycetes</taxon>
        <taxon>Eurotiomycetidae</taxon>
        <taxon>Eurotiales</taxon>
        <taxon>Aspergillaceae</taxon>
        <taxon>Aspergillus</taxon>
        <taxon>Aspergillus subgen. Nidulantes</taxon>
    </lineage>
</organism>
<protein>
    <recommendedName>
        <fullName>MICOS complex subunit mic19</fullName>
    </recommendedName>
</protein>
<gene>
    <name type="ORF">AN8690</name>
</gene>